<reference key="1">
    <citation type="journal article" date="2001" name="J. Biol. Chem.">
        <title>The forkhead-associated domain of NBS1 is essential for nuclear foci formation after irradiation but not essential for hRAD50.hMRE11.NBS1 complex DNA repair activity.</title>
        <authorList>
            <person name="Tauchi H."/>
            <person name="Kobayashi J."/>
            <person name="Morishima K."/>
            <person name="Matsuura S."/>
            <person name="Nakamura A."/>
            <person name="Shiraishi T."/>
            <person name="Ito E."/>
            <person name="Masnada D."/>
            <person name="Delia D."/>
            <person name="Komatsu K."/>
        </authorList>
    </citation>
    <scope>NUCLEOTIDE SEQUENCE [MRNA]</scope>
</reference>
<reference key="2">
    <citation type="journal article" date="2002" name="Nature">
        <title>Nbs1 is essential for DNA repair by homologous recombination in higher vertebrate cells.</title>
        <authorList>
            <person name="Tauchi H."/>
            <person name="Kobayashi J."/>
            <person name="Morishima K."/>
            <person name="van Gent D.C."/>
            <person name="Shiraishi T."/>
            <person name="Verkaik N.S."/>
            <person name="vanHeems D."/>
            <person name="Ito E."/>
            <person name="Nakamura A."/>
            <person name="Sonoda E."/>
            <person name="Takata M."/>
            <person name="Takeda S."/>
            <person name="Matsuura S."/>
            <person name="Komatsu K."/>
        </authorList>
    </citation>
    <scope>FUNCTION IN DNA DSB REPAIR</scope>
</reference>
<comment type="function">
    <text evidence="1 2 6">Component of the MRN complex, which plays a central role in double-strand break (DSB) repair, DNA recombination, maintenance of telomere integrity and meiosis (PubMed:12422221). The MRN complex is involved in the repair of DNA double-strand breaks (DSBs) via homologous recombination (HR), an error-free mechanism which primarily occurs during S and G2 phases (By similarity). The complex (1) mediates the end resection of damaged DNA, which generates proper single-stranded DNA, a key initial steps in HR, and is (2) required for the recruitment of other repair factors and efficient activation of ATM and ATR upon DNA damage (By similarity). The MRN complex possesses single-strand endonuclease activity and double-strand-specific 3'-5' exonuclease activity, which are provided by MRE11, to initiate end resection, which is required for single-strand invasion and recombination (By similarity). Within the MRN complex, NBN acts as a protein-protein adapter, which specifically recognizes and binds phosphorylated proteins, promoting their recruitment to DNA damage sites (By similarity). Recruits MRE11 and RAD50 components of the MRN complex to DSBs in response to DNA damage (By similarity). Promotes the recruitment of PI3/PI4-kinase family members ATM, ATR, and probably DNA-PKcs to the DNA damage sites, activating their functions (By similarity). Mediates the recruitment of phosphorylated RBBP8/CtIP to DSBs, leading to cooperation between the MRN complex and RBBP8/CtIP to initiate end resection (By similarity). The MRN complex and rbbp8/CtIP are also required for chromosome alignment during metaphase (By similarity).</text>
</comment>
<comment type="subunit">
    <text evidence="2">Component of the MRN complex composed of two heterodimers RAD50 and mre11 associated with a single NBN.</text>
</comment>
<comment type="subcellular location">
    <subcellularLocation>
        <location evidence="1">Nucleus</location>
    </subcellularLocation>
    <subcellularLocation>
        <location evidence="1">Chromosome</location>
    </subcellularLocation>
    <subcellularLocation>
        <location evidence="1">Nucleus</location>
        <location evidence="1">PML body</location>
    </subcellularLocation>
    <subcellularLocation>
        <location evidence="1">Chromosome</location>
        <location evidence="1">Telomere</location>
    </subcellularLocation>
    <text evidence="1">Localizes to DNA double-strand breaks (DSBs); recruited to DNA damage sites via association with phosphorylated proteins, such as phosphorylated H2AX.</text>
</comment>
<comment type="domain">
    <text evidence="1">The FHA and BRCT domains specifically recognize and bind phosphorylated proteins.</text>
</comment>
<comment type="domain">
    <text evidence="1">The C-terminal domain contains a MRE11-binding site, and this interaction is required for the nuclear localization of the MRN complex.</text>
</comment>
<comment type="domain">
    <text evidence="1">The FxF/Y motif (also named EEXXXDDL motif) is required for the interaction with ATM and its recruitment to sites of DNA damage and promote the phosphorylation of ATM substrates, leading to the events of DNA damage response.</text>
</comment>
<comment type="similarity">
    <text evidence="7">Belongs to the Nibrin family.</text>
</comment>
<evidence type="ECO:0000250" key="1">
    <source>
        <dbReference type="UniProtKB" id="O60934"/>
    </source>
</evidence>
<evidence type="ECO:0000250" key="2">
    <source>
        <dbReference type="UniProtKB" id="Q6XV80"/>
    </source>
</evidence>
<evidence type="ECO:0000255" key="3"/>
<evidence type="ECO:0000255" key="4">
    <source>
        <dbReference type="PROSITE-ProRule" id="PRU00086"/>
    </source>
</evidence>
<evidence type="ECO:0000256" key="5">
    <source>
        <dbReference type="SAM" id="MobiDB-lite"/>
    </source>
</evidence>
<evidence type="ECO:0000269" key="6">
    <source>
    </source>
</evidence>
<evidence type="ECO:0000305" key="7"/>
<proteinExistence type="evidence at protein level"/>
<gene>
    <name type="primary">NBN</name>
    <name type="synonym">NBS1</name>
</gene>
<accession>Q9DE07</accession>
<sequence>MWKLVPAAGPGEPFRLLVGTEYVVGRKNCAFLIQDDQSISRSHAVLTVSRPETTHSQSVSVPVLTIKDTSKYGTFVNGSKLSGASRSLQSGDRVNFGVFESKFRVEYESLVVCSSCLDVAQKTALNEAIQQLGGLVVNEWTKECTHLIMESVKVTVKTICALICGRPIVKPEFFSELMKAVQSRQQLPTPESFYPSVDEPAIGIDNMDLSGHPERKKIFSGKTFVFLTAKQHKKLGPAVILGGGEAKLMAEERKETSLLVSPEVCVVDVGVTNSQILGSESMRNWTDSILAVLESNNLRAIPEAEIGLAVIFMSTEIYCNPQRQPDNKAVTASTASKVRPVSSQSSTVDETIMPTAAADYSTLNVADTEIEEQTCMEIERTTSQTTRREKVAFQQAAVRENPSTSGTVNAGMLISRVNRTSGFGQKNHPHSPSKILEVDKPRECTPRQQSNSITNYFHVARKRERAEEGEETSLSKQAKLEKKPLPVSECTESSASSAWNSEKEQHGKGNNIQLGRESGELASDKTDIKITFSENPAPKKRKELDDVSEDVETLEMVFESRDLDWEEQTANGDQEAQSNKRKKRCLETKGSRTEEGNTKQREENEMLRKEEVGSVLTLEDKSKIKEESSVSIRNKLINHNKLEDDSSRLPSKLLLTEFRSLVVSCPRSNSPTMRNTKCRGQNNFKTFRKVPYPGAGQLPYIIGGSDLVAHQARKNSELEEWLREELEEQNRRAREESLADDLFRYDPNVKRRR</sequence>
<name>NBN_CHICK</name>
<feature type="chain" id="PRO_0000231047" description="Nibrin">
    <location>
        <begin position="1"/>
        <end position="753"/>
    </location>
</feature>
<feature type="domain" description="FHA" evidence="4">
    <location>
        <begin position="22"/>
        <end position="81"/>
    </location>
</feature>
<feature type="domain" description="BRCT 1" evidence="3">
    <location>
        <begin position="101"/>
        <end position="191"/>
    </location>
</feature>
<feature type="domain" description="BRCT 2" evidence="1">
    <location>
        <begin position="221"/>
        <end position="311"/>
    </location>
</feature>
<feature type="region of interest" description="Disordered" evidence="5">
    <location>
        <begin position="442"/>
        <end position="606"/>
    </location>
</feature>
<feature type="short sequence motif" description="Nuclear localization signal" evidence="1">
    <location>
        <begin position="461"/>
        <end position="467"/>
    </location>
</feature>
<feature type="short sequence motif" description="FxF/Y motif" evidence="1">
    <location>
        <begin position="739"/>
        <end position="748"/>
    </location>
</feature>
<feature type="compositionally biased region" description="Polar residues" evidence="5">
    <location>
        <begin position="446"/>
        <end position="455"/>
    </location>
</feature>
<feature type="compositionally biased region" description="Polar residues" evidence="5">
    <location>
        <begin position="490"/>
        <end position="500"/>
    </location>
</feature>
<feature type="compositionally biased region" description="Basic and acidic residues" evidence="5">
    <location>
        <begin position="517"/>
        <end position="528"/>
    </location>
</feature>
<feature type="compositionally biased region" description="Polar residues" evidence="5">
    <location>
        <begin position="568"/>
        <end position="577"/>
    </location>
</feature>
<feature type="compositionally biased region" description="Basic and acidic residues" evidence="5">
    <location>
        <begin position="585"/>
        <end position="606"/>
    </location>
</feature>
<feature type="modified residue" description="Phosphoserine" evidence="1">
    <location>
        <position position="274"/>
    </location>
</feature>
<feature type="modified residue" description="Phosphoserine; by ATM" evidence="1">
    <location>
        <position position="343"/>
    </location>
</feature>
<dbReference type="EMBL" id="AF230342">
    <property type="protein sequence ID" value="AAG47947.1"/>
    <property type="molecule type" value="mRNA"/>
</dbReference>
<dbReference type="RefSeq" id="NP_989668.1">
    <property type="nucleotide sequence ID" value="NM_204337.1"/>
</dbReference>
<dbReference type="SMR" id="Q9DE07"/>
<dbReference type="FunCoup" id="Q9DE07">
    <property type="interactions" value="775"/>
</dbReference>
<dbReference type="STRING" id="9031.ENSGALP00000056425"/>
<dbReference type="PaxDb" id="9031-ENSGALP00000041080"/>
<dbReference type="GeneID" id="374246"/>
<dbReference type="KEGG" id="gga:374246"/>
<dbReference type="CTD" id="4683"/>
<dbReference type="VEuPathDB" id="HostDB:geneid_374246"/>
<dbReference type="eggNOG" id="ENOG502QQ7Y">
    <property type="taxonomic scope" value="Eukaryota"/>
</dbReference>
<dbReference type="InParanoid" id="Q9DE07"/>
<dbReference type="OrthoDB" id="552194at2759"/>
<dbReference type="PhylomeDB" id="Q9DE07"/>
<dbReference type="Reactome" id="R-GGA-217106">
    <property type="pathway name" value="Chk1-controlled and DNA-damage induced centrosome duplication"/>
</dbReference>
<dbReference type="Reactome" id="R-GGA-351433">
    <property type="pathway name" value="ATM mediated phosphorylation of repair proteins"/>
</dbReference>
<dbReference type="Reactome" id="R-GGA-351442">
    <property type="pathway name" value="ATM mediated response to DNA double-strand break"/>
</dbReference>
<dbReference type="Reactome" id="R-GGA-351444">
    <property type="pathway name" value="Recruitment of repair and signaling proteins to double-strand breaks"/>
</dbReference>
<dbReference type="PRO" id="PR:Q9DE07"/>
<dbReference type="Proteomes" id="UP000000539">
    <property type="component" value="Unassembled WGS sequence"/>
</dbReference>
<dbReference type="GO" id="GO:0000781">
    <property type="term" value="C:chromosome, telomeric region"/>
    <property type="evidence" value="ECO:0000250"/>
    <property type="project" value="UniProtKB"/>
</dbReference>
<dbReference type="GO" id="GO:0030870">
    <property type="term" value="C:Mre11 complex"/>
    <property type="evidence" value="ECO:0000250"/>
    <property type="project" value="UniProtKB"/>
</dbReference>
<dbReference type="GO" id="GO:0042405">
    <property type="term" value="C:nuclear inclusion body"/>
    <property type="evidence" value="ECO:0000250"/>
    <property type="project" value="UniProtKB"/>
</dbReference>
<dbReference type="GO" id="GO:0005654">
    <property type="term" value="C:nucleoplasm"/>
    <property type="evidence" value="ECO:0000304"/>
    <property type="project" value="Reactome"/>
</dbReference>
<dbReference type="GO" id="GO:0016605">
    <property type="term" value="C:PML body"/>
    <property type="evidence" value="ECO:0007669"/>
    <property type="project" value="UniProtKB-SubCell"/>
</dbReference>
<dbReference type="GO" id="GO:0035861">
    <property type="term" value="C:site of double-strand break"/>
    <property type="evidence" value="ECO:0000250"/>
    <property type="project" value="UniProtKB"/>
</dbReference>
<dbReference type="GO" id="GO:0140463">
    <property type="term" value="F:chromatin-protein adaptor activity"/>
    <property type="evidence" value="ECO:0000250"/>
    <property type="project" value="UniProtKB"/>
</dbReference>
<dbReference type="GO" id="GO:0003684">
    <property type="term" value="F:damaged DNA binding"/>
    <property type="evidence" value="ECO:0000318"/>
    <property type="project" value="GO_Central"/>
</dbReference>
<dbReference type="GO" id="GO:0140297">
    <property type="term" value="F:DNA-binding transcription factor binding"/>
    <property type="evidence" value="ECO:0000250"/>
    <property type="project" value="UniProtKB"/>
</dbReference>
<dbReference type="GO" id="GO:0140031">
    <property type="term" value="F:phosphorylation-dependent protein binding"/>
    <property type="evidence" value="ECO:0000250"/>
    <property type="project" value="UniProtKB"/>
</dbReference>
<dbReference type="GO" id="GO:0043539">
    <property type="term" value="F:protein serine/threonine kinase activator activity"/>
    <property type="evidence" value="ECO:0000250"/>
    <property type="project" value="UniProtKB"/>
</dbReference>
<dbReference type="GO" id="GO:0000729">
    <property type="term" value="P:DNA double-strand break processing"/>
    <property type="evidence" value="ECO:0000250"/>
    <property type="project" value="UniProtKB"/>
</dbReference>
<dbReference type="GO" id="GO:0006302">
    <property type="term" value="P:double-strand break repair"/>
    <property type="evidence" value="ECO:0000250"/>
    <property type="project" value="UniProtKB"/>
</dbReference>
<dbReference type="GO" id="GO:0000724">
    <property type="term" value="P:double-strand break repair via homologous recombination"/>
    <property type="evidence" value="ECO:0000318"/>
    <property type="project" value="GO_Central"/>
</dbReference>
<dbReference type="GO" id="GO:0051321">
    <property type="term" value="P:meiotic cell cycle"/>
    <property type="evidence" value="ECO:0007669"/>
    <property type="project" value="UniProtKB-KW"/>
</dbReference>
<dbReference type="GO" id="GO:0007095">
    <property type="term" value="P:mitotic G2 DNA damage checkpoint signaling"/>
    <property type="evidence" value="ECO:0000250"/>
    <property type="project" value="UniProtKB"/>
</dbReference>
<dbReference type="GO" id="GO:0031848">
    <property type="term" value="P:protection from non-homologous end joining at telomere"/>
    <property type="evidence" value="ECO:0000250"/>
    <property type="project" value="UniProtKB"/>
</dbReference>
<dbReference type="GO" id="GO:1990166">
    <property type="term" value="P:protein localization to site of double-strand break"/>
    <property type="evidence" value="ECO:0000250"/>
    <property type="project" value="UniProtKB"/>
</dbReference>
<dbReference type="GO" id="GO:0062176">
    <property type="term" value="P:R-loop processing"/>
    <property type="evidence" value="ECO:0000250"/>
    <property type="project" value="UniProtKB"/>
</dbReference>
<dbReference type="GO" id="GO:0048145">
    <property type="term" value="P:regulation of fibroblast proliferation"/>
    <property type="evidence" value="ECO:0000250"/>
    <property type="project" value="UniProtKB"/>
</dbReference>
<dbReference type="GO" id="GO:0000723">
    <property type="term" value="P:telomere maintenance"/>
    <property type="evidence" value="ECO:0000250"/>
    <property type="project" value="UniProtKB"/>
</dbReference>
<dbReference type="GO" id="GO:0043247">
    <property type="term" value="P:telomere maintenance in response to DNA damage"/>
    <property type="evidence" value="ECO:0000250"/>
    <property type="project" value="UniProtKB"/>
</dbReference>
<dbReference type="CDD" id="cd17741">
    <property type="entry name" value="BRCT_nibrin"/>
    <property type="match status" value="1"/>
</dbReference>
<dbReference type="CDD" id="cd22667">
    <property type="entry name" value="FHA_NBN"/>
    <property type="match status" value="1"/>
</dbReference>
<dbReference type="FunFam" id="2.60.200.20:FF:000017">
    <property type="entry name" value="Nibrin"/>
    <property type="match status" value="1"/>
</dbReference>
<dbReference type="FunFam" id="3.40.50.10190:FF:000024">
    <property type="entry name" value="Nibrin"/>
    <property type="match status" value="1"/>
</dbReference>
<dbReference type="FunFam" id="3.40.50.10980:FF:000001">
    <property type="entry name" value="Nibrin"/>
    <property type="match status" value="1"/>
</dbReference>
<dbReference type="Gene3D" id="2.60.200.20">
    <property type="match status" value="1"/>
</dbReference>
<dbReference type="Gene3D" id="3.40.50.10190">
    <property type="entry name" value="BRCT domain"/>
    <property type="match status" value="1"/>
</dbReference>
<dbReference type="Gene3D" id="3.40.50.10980">
    <property type="entry name" value="Nibrin, BRCT2 domain"/>
    <property type="match status" value="1"/>
</dbReference>
<dbReference type="InterPro" id="IPR001357">
    <property type="entry name" value="BRCT_dom"/>
</dbReference>
<dbReference type="InterPro" id="IPR036420">
    <property type="entry name" value="BRCT_dom_sf"/>
</dbReference>
<dbReference type="InterPro" id="IPR000253">
    <property type="entry name" value="FHA_dom"/>
</dbReference>
<dbReference type="InterPro" id="IPR040227">
    <property type="entry name" value="Nibrin-rel"/>
</dbReference>
<dbReference type="InterPro" id="IPR032429">
    <property type="entry name" value="Nibrin_BRCT2"/>
</dbReference>
<dbReference type="InterPro" id="IPR043014">
    <property type="entry name" value="Nibrin_BRCT2_sf"/>
</dbReference>
<dbReference type="InterPro" id="IPR013908">
    <property type="entry name" value="Nibrin_C"/>
</dbReference>
<dbReference type="InterPro" id="IPR016592">
    <property type="entry name" value="Nibrin_met"/>
</dbReference>
<dbReference type="InterPro" id="IPR008984">
    <property type="entry name" value="SMAD_FHA_dom_sf"/>
</dbReference>
<dbReference type="PANTHER" id="PTHR12162:SF0">
    <property type="entry name" value="NIBRIN"/>
    <property type="match status" value="1"/>
</dbReference>
<dbReference type="PANTHER" id="PTHR12162">
    <property type="entry name" value="NIBRIN-RELATED"/>
    <property type="match status" value="1"/>
</dbReference>
<dbReference type="Pfam" id="PF00533">
    <property type="entry name" value="BRCT"/>
    <property type="match status" value="1"/>
</dbReference>
<dbReference type="Pfam" id="PF00498">
    <property type="entry name" value="FHA"/>
    <property type="match status" value="1"/>
</dbReference>
<dbReference type="Pfam" id="PF08599">
    <property type="entry name" value="Nbs1_C"/>
    <property type="match status" value="1"/>
</dbReference>
<dbReference type="Pfam" id="PF16508">
    <property type="entry name" value="NIBRIN_BRCT_II"/>
    <property type="match status" value="1"/>
</dbReference>
<dbReference type="PIRSF" id="PIRSF011869">
    <property type="entry name" value="Nibrin_animal"/>
    <property type="match status" value="1"/>
</dbReference>
<dbReference type="SMART" id="SM00292">
    <property type="entry name" value="BRCT"/>
    <property type="match status" value="1"/>
</dbReference>
<dbReference type="SMART" id="SM00240">
    <property type="entry name" value="FHA"/>
    <property type="match status" value="1"/>
</dbReference>
<dbReference type="SMART" id="SM01348">
    <property type="entry name" value="Nbs1_C"/>
    <property type="match status" value="1"/>
</dbReference>
<dbReference type="SUPFAM" id="SSF52113">
    <property type="entry name" value="BRCT domain"/>
    <property type="match status" value="1"/>
</dbReference>
<dbReference type="SUPFAM" id="SSF49879">
    <property type="entry name" value="SMAD/FHA domain"/>
    <property type="match status" value="1"/>
</dbReference>
<dbReference type="PROSITE" id="PS50006">
    <property type="entry name" value="FHA_DOMAIN"/>
    <property type="match status" value="1"/>
</dbReference>
<organism>
    <name type="scientific">Gallus gallus</name>
    <name type="common">Chicken</name>
    <dbReference type="NCBI Taxonomy" id="9031"/>
    <lineage>
        <taxon>Eukaryota</taxon>
        <taxon>Metazoa</taxon>
        <taxon>Chordata</taxon>
        <taxon>Craniata</taxon>
        <taxon>Vertebrata</taxon>
        <taxon>Euteleostomi</taxon>
        <taxon>Archelosauria</taxon>
        <taxon>Archosauria</taxon>
        <taxon>Dinosauria</taxon>
        <taxon>Saurischia</taxon>
        <taxon>Theropoda</taxon>
        <taxon>Coelurosauria</taxon>
        <taxon>Aves</taxon>
        <taxon>Neognathae</taxon>
        <taxon>Galloanserae</taxon>
        <taxon>Galliformes</taxon>
        <taxon>Phasianidae</taxon>
        <taxon>Phasianinae</taxon>
        <taxon>Gallus</taxon>
    </lineage>
</organism>
<keyword id="KW-0131">Cell cycle</keyword>
<keyword id="KW-0158">Chromosome</keyword>
<keyword id="KW-0227">DNA damage</keyword>
<keyword id="KW-0234">DNA repair</keyword>
<keyword id="KW-0469">Meiosis</keyword>
<keyword id="KW-0539">Nucleus</keyword>
<keyword id="KW-0597">Phosphoprotein</keyword>
<keyword id="KW-1185">Reference proteome</keyword>
<keyword id="KW-0779">Telomere</keyword>
<protein>
    <recommendedName>
        <fullName>Nibrin</fullName>
    </recommendedName>
    <alternativeName>
        <fullName>Nijmegen breakage syndrome protein 1 homolog</fullName>
    </alternativeName>
</protein>